<feature type="chain" id="PRO_1000089839" description="UPF0758 protein YicR">
    <location>
        <begin position="1"/>
        <end position="221"/>
    </location>
</feature>
<feature type="domain" description="MPN" evidence="2">
    <location>
        <begin position="99"/>
        <end position="221"/>
    </location>
</feature>
<feature type="short sequence motif" description="JAMM motif" evidence="2">
    <location>
        <begin position="170"/>
        <end position="183"/>
    </location>
</feature>
<feature type="binding site" evidence="2">
    <location>
        <position position="170"/>
    </location>
    <ligand>
        <name>Zn(2+)</name>
        <dbReference type="ChEBI" id="CHEBI:29105"/>
        <note>catalytic</note>
    </ligand>
</feature>
<feature type="binding site" evidence="2">
    <location>
        <position position="172"/>
    </location>
    <ligand>
        <name>Zn(2+)</name>
        <dbReference type="ChEBI" id="CHEBI:29105"/>
        <note>catalytic</note>
    </ligand>
</feature>
<feature type="binding site" evidence="2">
    <location>
        <position position="183"/>
    </location>
    <ligand>
        <name>Zn(2+)</name>
        <dbReference type="ChEBI" id="CHEBI:29105"/>
        <note>catalytic</note>
    </ligand>
</feature>
<name>YICR_SALEP</name>
<reference key="1">
    <citation type="journal article" date="2008" name="Genome Res.">
        <title>Comparative genome analysis of Salmonella enteritidis PT4 and Salmonella gallinarum 287/91 provides insights into evolutionary and host adaptation pathways.</title>
        <authorList>
            <person name="Thomson N.R."/>
            <person name="Clayton D.J."/>
            <person name="Windhorst D."/>
            <person name="Vernikos G."/>
            <person name="Davidson S."/>
            <person name="Churcher C."/>
            <person name="Quail M.A."/>
            <person name="Stevens M."/>
            <person name="Jones M.A."/>
            <person name="Watson M."/>
            <person name="Barron A."/>
            <person name="Layton A."/>
            <person name="Pickard D."/>
            <person name="Kingsley R.A."/>
            <person name="Bignell A."/>
            <person name="Clark L."/>
            <person name="Harris B."/>
            <person name="Ormond D."/>
            <person name="Abdellah Z."/>
            <person name="Brooks K."/>
            <person name="Cherevach I."/>
            <person name="Chillingworth T."/>
            <person name="Woodward J."/>
            <person name="Norberczak H."/>
            <person name="Lord A."/>
            <person name="Arrowsmith C."/>
            <person name="Jagels K."/>
            <person name="Moule S."/>
            <person name="Mungall K."/>
            <person name="Saunders M."/>
            <person name="Whitehead S."/>
            <person name="Chabalgoity J.A."/>
            <person name="Maskell D."/>
            <person name="Humphreys T."/>
            <person name="Roberts M."/>
            <person name="Barrow P.A."/>
            <person name="Dougan G."/>
            <person name="Parkhill J."/>
        </authorList>
    </citation>
    <scope>NUCLEOTIDE SEQUENCE [LARGE SCALE GENOMIC DNA]</scope>
    <source>
        <strain>P125109</strain>
    </source>
</reference>
<proteinExistence type="inferred from homology"/>
<organism>
    <name type="scientific">Salmonella enteritidis PT4 (strain P125109)</name>
    <dbReference type="NCBI Taxonomy" id="550537"/>
    <lineage>
        <taxon>Bacteria</taxon>
        <taxon>Pseudomonadati</taxon>
        <taxon>Pseudomonadota</taxon>
        <taxon>Gammaproteobacteria</taxon>
        <taxon>Enterobacterales</taxon>
        <taxon>Enterobacteriaceae</taxon>
        <taxon>Salmonella</taxon>
    </lineage>
</organism>
<accession>B5R5G2</accession>
<protein>
    <recommendedName>
        <fullName evidence="1">UPF0758 protein YicR</fullName>
    </recommendedName>
</protein>
<keyword id="KW-0378">Hydrolase</keyword>
<keyword id="KW-0479">Metal-binding</keyword>
<keyword id="KW-0482">Metalloprotease</keyword>
<keyword id="KW-0645">Protease</keyword>
<keyword id="KW-0862">Zinc</keyword>
<comment type="similarity">
    <text evidence="1">Belongs to the UPF0758 family. YicR subfamily.</text>
</comment>
<evidence type="ECO:0000255" key="1">
    <source>
        <dbReference type="HAMAP-Rule" id="MF_00018"/>
    </source>
</evidence>
<evidence type="ECO:0000255" key="2">
    <source>
        <dbReference type="PROSITE-ProRule" id="PRU01182"/>
    </source>
</evidence>
<gene>
    <name evidence="1" type="primary">yicR</name>
    <name type="ordered locus">SEN3551</name>
</gene>
<dbReference type="EMBL" id="AM933172">
    <property type="protein sequence ID" value="CAR35130.1"/>
    <property type="molecule type" value="Genomic_DNA"/>
</dbReference>
<dbReference type="SMR" id="B5R5G2"/>
<dbReference type="KEGG" id="set:SEN3551"/>
<dbReference type="HOGENOM" id="CLU_073529_0_1_6"/>
<dbReference type="Proteomes" id="UP000000613">
    <property type="component" value="Chromosome"/>
</dbReference>
<dbReference type="GO" id="GO:0046872">
    <property type="term" value="F:metal ion binding"/>
    <property type="evidence" value="ECO:0007669"/>
    <property type="project" value="UniProtKB-KW"/>
</dbReference>
<dbReference type="GO" id="GO:0008237">
    <property type="term" value="F:metallopeptidase activity"/>
    <property type="evidence" value="ECO:0007669"/>
    <property type="project" value="UniProtKB-KW"/>
</dbReference>
<dbReference type="GO" id="GO:0006508">
    <property type="term" value="P:proteolysis"/>
    <property type="evidence" value="ECO:0007669"/>
    <property type="project" value="UniProtKB-KW"/>
</dbReference>
<dbReference type="CDD" id="cd08071">
    <property type="entry name" value="MPN_DUF2466"/>
    <property type="match status" value="1"/>
</dbReference>
<dbReference type="Gene3D" id="3.40.140.10">
    <property type="entry name" value="Cytidine Deaminase, domain 2"/>
    <property type="match status" value="1"/>
</dbReference>
<dbReference type="HAMAP" id="MF_00018">
    <property type="entry name" value="UPF0758_YicR"/>
    <property type="match status" value="1"/>
</dbReference>
<dbReference type="InterPro" id="IPR037518">
    <property type="entry name" value="MPN"/>
</dbReference>
<dbReference type="InterPro" id="IPR025657">
    <property type="entry name" value="RadC_JAB"/>
</dbReference>
<dbReference type="InterPro" id="IPR010994">
    <property type="entry name" value="RuvA_2-like"/>
</dbReference>
<dbReference type="InterPro" id="IPR001405">
    <property type="entry name" value="UPF0758"/>
</dbReference>
<dbReference type="InterPro" id="IPR020891">
    <property type="entry name" value="UPF0758_CS"/>
</dbReference>
<dbReference type="InterPro" id="IPR046778">
    <property type="entry name" value="UPF0758_N"/>
</dbReference>
<dbReference type="InterPro" id="IPR022820">
    <property type="entry name" value="UPF0758_YicR"/>
</dbReference>
<dbReference type="NCBIfam" id="NF000642">
    <property type="entry name" value="PRK00024.1"/>
    <property type="match status" value="1"/>
</dbReference>
<dbReference type="NCBIfam" id="TIGR00608">
    <property type="entry name" value="radc"/>
    <property type="match status" value="1"/>
</dbReference>
<dbReference type="PANTHER" id="PTHR30471">
    <property type="entry name" value="DNA REPAIR PROTEIN RADC"/>
    <property type="match status" value="1"/>
</dbReference>
<dbReference type="PANTHER" id="PTHR30471:SF3">
    <property type="entry name" value="UPF0758 PROTEIN YEES-RELATED"/>
    <property type="match status" value="1"/>
</dbReference>
<dbReference type="Pfam" id="PF04002">
    <property type="entry name" value="RadC"/>
    <property type="match status" value="1"/>
</dbReference>
<dbReference type="Pfam" id="PF20582">
    <property type="entry name" value="UPF0758_N"/>
    <property type="match status" value="1"/>
</dbReference>
<dbReference type="SUPFAM" id="SSF47781">
    <property type="entry name" value="RuvA domain 2-like"/>
    <property type="match status" value="1"/>
</dbReference>
<dbReference type="PROSITE" id="PS50249">
    <property type="entry name" value="MPN"/>
    <property type="match status" value="1"/>
</dbReference>
<dbReference type="PROSITE" id="PS01302">
    <property type="entry name" value="UPF0758"/>
    <property type="match status" value="1"/>
</dbReference>
<sequence length="221" mass="24890">MDTLDELLPREKMLRSGIASLSDVELLALFLRTGTPGKDVMTLAKEILQHFGSLYGLLSADFAQFRGVNGIGLAKFAQLKGIAELARRYYSVRMNEESALLSPEMTREFLQSQLTGEEREIFLVIFLDAQHRVLQHSRLFSGTLNHVEVHPREIVREAIKLNASAVILAHNHPSGCAEPSKADKLITERVIKCCQFMDIRVLDHLIIGRGEYVSFAERGWI</sequence>